<accession>Q5SPX1</accession>
<accession>Q0P531</accession>
<accession>Q3V0G5</accession>
<accession>Q5DTW1</accession>
<accession>Q8C5Y5</accession>
<feature type="chain" id="PRO_0000319421" description="Coiled-coil domain-containing protein 157">
    <location>
        <begin position="1"/>
        <end position="718"/>
    </location>
</feature>
<feature type="region of interest" description="Disordered" evidence="2">
    <location>
        <begin position="469"/>
        <end position="490"/>
    </location>
</feature>
<feature type="region of interest" description="Disordered" evidence="2">
    <location>
        <begin position="617"/>
        <end position="690"/>
    </location>
</feature>
<feature type="coiled-coil region" evidence="1">
    <location>
        <begin position="300"/>
        <end position="603"/>
    </location>
</feature>
<feature type="compositionally biased region" description="Basic and acidic residues" evidence="2">
    <location>
        <begin position="469"/>
        <end position="482"/>
    </location>
</feature>
<feature type="compositionally biased region" description="Low complexity" evidence="2">
    <location>
        <begin position="639"/>
        <end position="659"/>
    </location>
</feature>
<feature type="splice variant" id="VSP_031476" description="In isoform 2." evidence="3 4 5">
    <location>
        <begin position="1"/>
        <end position="102"/>
    </location>
</feature>
<feature type="sequence conflict" description="In Ref. 1; BAC36532." evidence="6" ref="1">
    <original>K</original>
    <variation>R</variation>
    <location>
        <position position="172"/>
    </location>
</feature>
<dbReference type="EMBL" id="AK076934">
    <property type="protein sequence ID" value="BAC36532.1"/>
    <property type="molecule type" value="mRNA"/>
</dbReference>
<dbReference type="EMBL" id="AK133165">
    <property type="protein sequence ID" value="BAE21539.1"/>
    <property type="status" value="ALT_INIT"/>
    <property type="molecule type" value="mRNA"/>
</dbReference>
<dbReference type="EMBL" id="AK220409">
    <property type="protein sequence ID" value="BAD90260.1"/>
    <property type="status" value="ALT_INIT"/>
    <property type="molecule type" value="mRNA"/>
</dbReference>
<dbReference type="EMBL" id="AL807825">
    <property type="status" value="NOT_ANNOTATED_CDS"/>
    <property type="molecule type" value="Genomic_DNA"/>
</dbReference>
<dbReference type="EMBL" id="BC120737">
    <property type="protein sequence ID" value="AAI20738.1"/>
    <property type="molecule type" value="mRNA"/>
</dbReference>
<dbReference type="EMBL" id="BC120739">
    <property type="protein sequence ID" value="AAI20740.1"/>
    <property type="molecule type" value="mRNA"/>
</dbReference>
<dbReference type="CCDS" id="CCDS24379.1">
    <molecule id="Q5SPX1-2"/>
</dbReference>
<dbReference type="CCDS" id="CCDS48743.1">
    <molecule id="Q5SPX1-1"/>
</dbReference>
<dbReference type="RefSeq" id="NP_001158092.1">
    <molecule id="Q5SPX1-1"/>
    <property type="nucleotide sequence ID" value="NM_001164620.1"/>
</dbReference>
<dbReference type="RefSeq" id="NP_808284.2">
    <molecule id="Q5SPX1-2"/>
    <property type="nucleotide sequence ID" value="NM_177616.3"/>
</dbReference>
<dbReference type="RefSeq" id="XP_036012407.1">
    <molecule id="Q5SPX1-1"/>
    <property type="nucleotide sequence ID" value="XM_036156514.1"/>
</dbReference>
<dbReference type="RefSeq" id="XP_036012408.1">
    <molecule id="Q5SPX1-2"/>
    <property type="nucleotide sequence ID" value="XM_036156515.1"/>
</dbReference>
<dbReference type="SMR" id="Q5SPX1"/>
<dbReference type="FunCoup" id="Q5SPX1">
    <property type="interactions" value="24"/>
</dbReference>
<dbReference type="STRING" id="10090.ENSMUSP00000091074"/>
<dbReference type="iPTMnet" id="Q5SPX1"/>
<dbReference type="PhosphoSitePlus" id="Q5SPX1"/>
<dbReference type="PaxDb" id="10090-ENSMUSP00000091074"/>
<dbReference type="PeptideAtlas" id="Q5SPX1"/>
<dbReference type="ProteomicsDB" id="281242">
    <molecule id="Q5SPX1-1"/>
</dbReference>
<dbReference type="ProteomicsDB" id="281243">
    <molecule id="Q5SPX1-2"/>
</dbReference>
<dbReference type="Antibodypedia" id="45362">
    <property type="antibodies" value="35 antibodies from 12 providers"/>
</dbReference>
<dbReference type="DNASU" id="216516"/>
<dbReference type="Ensembl" id="ENSMUST00000093381.11">
    <molecule id="Q5SPX1-1"/>
    <property type="protein sequence ID" value="ENSMUSP00000091074.5"/>
    <property type="gene ID" value="ENSMUSG00000051427.15"/>
</dbReference>
<dbReference type="Ensembl" id="ENSMUST00000101626.9">
    <molecule id="Q5SPX1-2"/>
    <property type="protein sequence ID" value="ENSMUSP00000099148.3"/>
    <property type="gene ID" value="ENSMUSG00000051427.15"/>
</dbReference>
<dbReference type="GeneID" id="216516"/>
<dbReference type="KEGG" id="mmu:216516"/>
<dbReference type="UCSC" id="uc007hul.1">
    <molecule id="Q5SPX1-1"/>
    <property type="organism name" value="mouse"/>
</dbReference>
<dbReference type="AGR" id="MGI:3041210"/>
<dbReference type="CTD" id="550631"/>
<dbReference type="MGI" id="MGI:3041210">
    <property type="gene designation" value="Ccdc157"/>
</dbReference>
<dbReference type="VEuPathDB" id="HostDB:ENSMUSG00000051427"/>
<dbReference type="eggNOG" id="ENOG502QPW2">
    <property type="taxonomic scope" value="Eukaryota"/>
</dbReference>
<dbReference type="GeneTree" id="ENSGT00390000013684"/>
<dbReference type="HOGENOM" id="CLU_019717_2_0_1"/>
<dbReference type="InParanoid" id="Q5SPX1"/>
<dbReference type="OrthoDB" id="10051906at2759"/>
<dbReference type="PhylomeDB" id="Q5SPX1"/>
<dbReference type="TreeFam" id="TF334443"/>
<dbReference type="BioGRID-ORCS" id="216516">
    <property type="hits" value="7 hits in 77 CRISPR screens"/>
</dbReference>
<dbReference type="PRO" id="PR:Q5SPX1"/>
<dbReference type="Proteomes" id="UP000000589">
    <property type="component" value="Chromosome 11"/>
</dbReference>
<dbReference type="RNAct" id="Q5SPX1">
    <property type="molecule type" value="protein"/>
</dbReference>
<dbReference type="Bgee" id="ENSMUSG00000051427">
    <property type="expression patterns" value="Expressed in olfactory epithelium and 207 other cell types or tissues"/>
</dbReference>
<dbReference type="InterPro" id="IPR029681">
    <property type="entry name" value="CCDC157"/>
</dbReference>
<dbReference type="PANTHER" id="PTHR43696">
    <property type="entry name" value="COILED-COIL DOMAIN-CONTAINING PROTEIN 157"/>
    <property type="match status" value="1"/>
</dbReference>
<dbReference type="PANTHER" id="PTHR43696:SF9">
    <property type="entry name" value="COILED-COIL DOMAIN-CONTAINING PROTEIN 157"/>
    <property type="match status" value="1"/>
</dbReference>
<keyword id="KW-0025">Alternative splicing</keyword>
<keyword id="KW-0175">Coiled coil</keyword>
<keyword id="KW-1185">Reference proteome</keyword>
<evidence type="ECO:0000255" key="1"/>
<evidence type="ECO:0000256" key="2">
    <source>
        <dbReference type="SAM" id="MobiDB-lite"/>
    </source>
</evidence>
<evidence type="ECO:0000303" key="3">
    <source>
    </source>
</evidence>
<evidence type="ECO:0000303" key="4">
    <source>
    </source>
</evidence>
<evidence type="ECO:0000303" key="5">
    <source ref="2"/>
</evidence>
<evidence type="ECO:0000305" key="6"/>
<gene>
    <name type="primary">Ccdc157</name>
    <name type="synonym">Kiaa1656</name>
</gene>
<organism>
    <name type="scientific">Mus musculus</name>
    <name type="common">Mouse</name>
    <dbReference type="NCBI Taxonomy" id="10090"/>
    <lineage>
        <taxon>Eukaryota</taxon>
        <taxon>Metazoa</taxon>
        <taxon>Chordata</taxon>
        <taxon>Craniata</taxon>
        <taxon>Vertebrata</taxon>
        <taxon>Euteleostomi</taxon>
        <taxon>Mammalia</taxon>
        <taxon>Eutheria</taxon>
        <taxon>Euarchontoglires</taxon>
        <taxon>Glires</taxon>
        <taxon>Rodentia</taxon>
        <taxon>Myomorpha</taxon>
        <taxon>Muroidea</taxon>
        <taxon>Muridae</taxon>
        <taxon>Murinae</taxon>
        <taxon>Mus</taxon>
        <taxon>Mus</taxon>
    </lineage>
</organism>
<sequence>MAHLLGSQACMDSLRKDLTDLQGTIVDVFSRAGPVRFPSWKFPDRVACDLDMVALLEHYDHVPGDPEFTQLSHAVLLELVIDRLLLLLQSCASYLENLSVEQMMPPARAAGPCMSVGLTVRRFWSNLLRLGLLYQQAVPQKRANQGEISITKPTAKGEPARSPECMTAKFIKPPSPVPGLPLICQGLQSIPVRVSLRSPGGTSEKTKSVYSQTVETALVPCDACTSVQGSLWEVGKVVISLCQSQNLPSSLGQFQKLVKDSLGLKPLPAATVGHWAAEQSKDLTRLNKHVGALTQLVGPLRAQLEDAEGQKDGLRKQVSKLEQALQQEQGQRQRQTEEAERTLAKCEHDRHQLLTETCDLKTKVAVLEGDLKQQQKSIQAMEAKAQQLEEEGERRAAAERQVQQLEEQVQLLAGRLDGASQQIRWASTELDKEKARVDSMVRHQESLQAKQRTLLQQLDCLDQEREELRGSLDEAEAQRSELEEQLQSLQSDREQEQCQLQAQQELLQSLQQEKQDLEQVTTDLQLTISELRQQLEELKERERLLVAFPDLHQPEEAQIQSSSNVTQDMERQVQANAIRIQVLQEENKRLQSMLTKIREVAQQGGLKMVPQGQLWSPPYKGIQGATPPAQAQSAFSGLTGRRQSPGSRTSSTGRTHPGGLRTSPSRQPGGLPSKFSLGDGSHSASCTQNPIRALARLRRKLSPNRQAGSTYQPQERPT</sequence>
<comment type="alternative products">
    <event type="alternative splicing"/>
    <isoform>
        <id>Q5SPX1-1</id>
        <name>1</name>
        <sequence type="displayed"/>
    </isoform>
    <isoform>
        <id>Q5SPX1-2</id>
        <name>2</name>
        <sequence type="described" ref="VSP_031476"/>
    </isoform>
</comment>
<comment type="sequence caution" evidence="6">
    <conflict type="erroneous initiation">
        <sequence resource="EMBL-CDS" id="BAD90260"/>
    </conflict>
</comment>
<comment type="sequence caution" evidence="6">
    <conflict type="erroneous initiation">
        <sequence resource="EMBL-CDS" id="BAE21539"/>
    </conflict>
</comment>
<reference key="1">
    <citation type="journal article" date="2005" name="Science">
        <title>The transcriptional landscape of the mammalian genome.</title>
        <authorList>
            <person name="Carninci P."/>
            <person name="Kasukawa T."/>
            <person name="Katayama S."/>
            <person name="Gough J."/>
            <person name="Frith M.C."/>
            <person name="Maeda N."/>
            <person name="Oyama R."/>
            <person name="Ravasi T."/>
            <person name="Lenhard B."/>
            <person name="Wells C."/>
            <person name="Kodzius R."/>
            <person name="Shimokawa K."/>
            <person name="Bajic V.B."/>
            <person name="Brenner S.E."/>
            <person name="Batalov S."/>
            <person name="Forrest A.R."/>
            <person name="Zavolan M."/>
            <person name="Davis M.J."/>
            <person name="Wilming L.G."/>
            <person name="Aidinis V."/>
            <person name="Allen J.E."/>
            <person name="Ambesi-Impiombato A."/>
            <person name="Apweiler R."/>
            <person name="Aturaliya R.N."/>
            <person name="Bailey T.L."/>
            <person name="Bansal M."/>
            <person name="Baxter L."/>
            <person name="Beisel K.W."/>
            <person name="Bersano T."/>
            <person name="Bono H."/>
            <person name="Chalk A.M."/>
            <person name="Chiu K.P."/>
            <person name="Choudhary V."/>
            <person name="Christoffels A."/>
            <person name="Clutterbuck D.R."/>
            <person name="Crowe M.L."/>
            <person name="Dalla E."/>
            <person name="Dalrymple B.P."/>
            <person name="de Bono B."/>
            <person name="Della Gatta G."/>
            <person name="di Bernardo D."/>
            <person name="Down T."/>
            <person name="Engstrom P."/>
            <person name="Fagiolini M."/>
            <person name="Faulkner G."/>
            <person name="Fletcher C.F."/>
            <person name="Fukushima T."/>
            <person name="Furuno M."/>
            <person name="Futaki S."/>
            <person name="Gariboldi M."/>
            <person name="Georgii-Hemming P."/>
            <person name="Gingeras T.R."/>
            <person name="Gojobori T."/>
            <person name="Green R.E."/>
            <person name="Gustincich S."/>
            <person name="Harbers M."/>
            <person name="Hayashi Y."/>
            <person name="Hensch T.K."/>
            <person name="Hirokawa N."/>
            <person name="Hill D."/>
            <person name="Huminiecki L."/>
            <person name="Iacono M."/>
            <person name="Ikeo K."/>
            <person name="Iwama A."/>
            <person name="Ishikawa T."/>
            <person name="Jakt M."/>
            <person name="Kanapin A."/>
            <person name="Katoh M."/>
            <person name="Kawasawa Y."/>
            <person name="Kelso J."/>
            <person name="Kitamura H."/>
            <person name="Kitano H."/>
            <person name="Kollias G."/>
            <person name="Krishnan S.P."/>
            <person name="Kruger A."/>
            <person name="Kummerfeld S.K."/>
            <person name="Kurochkin I.V."/>
            <person name="Lareau L.F."/>
            <person name="Lazarevic D."/>
            <person name="Lipovich L."/>
            <person name="Liu J."/>
            <person name="Liuni S."/>
            <person name="McWilliam S."/>
            <person name="Madan Babu M."/>
            <person name="Madera M."/>
            <person name="Marchionni L."/>
            <person name="Matsuda H."/>
            <person name="Matsuzawa S."/>
            <person name="Miki H."/>
            <person name="Mignone F."/>
            <person name="Miyake S."/>
            <person name="Morris K."/>
            <person name="Mottagui-Tabar S."/>
            <person name="Mulder N."/>
            <person name="Nakano N."/>
            <person name="Nakauchi H."/>
            <person name="Ng P."/>
            <person name="Nilsson R."/>
            <person name="Nishiguchi S."/>
            <person name="Nishikawa S."/>
            <person name="Nori F."/>
            <person name="Ohara O."/>
            <person name="Okazaki Y."/>
            <person name="Orlando V."/>
            <person name="Pang K.C."/>
            <person name="Pavan W.J."/>
            <person name="Pavesi G."/>
            <person name="Pesole G."/>
            <person name="Petrovsky N."/>
            <person name="Piazza S."/>
            <person name="Reed J."/>
            <person name="Reid J.F."/>
            <person name="Ring B.Z."/>
            <person name="Ringwald M."/>
            <person name="Rost B."/>
            <person name="Ruan Y."/>
            <person name="Salzberg S.L."/>
            <person name="Sandelin A."/>
            <person name="Schneider C."/>
            <person name="Schoenbach C."/>
            <person name="Sekiguchi K."/>
            <person name="Semple C.A."/>
            <person name="Seno S."/>
            <person name="Sessa L."/>
            <person name="Sheng Y."/>
            <person name="Shibata Y."/>
            <person name="Shimada H."/>
            <person name="Shimada K."/>
            <person name="Silva D."/>
            <person name="Sinclair B."/>
            <person name="Sperling S."/>
            <person name="Stupka E."/>
            <person name="Sugiura K."/>
            <person name="Sultana R."/>
            <person name="Takenaka Y."/>
            <person name="Taki K."/>
            <person name="Tammoja K."/>
            <person name="Tan S.L."/>
            <person name="Tang S."/>
            <person name="Taylor M.S."/>
            <person name="Tegner J."/>
            <person name="Teichmann S.A."/>
            <person name="Ueda H.R."/>
            <person name="van Nimwegen E."/>
            <person name="Verardo R."/>
            <person name="Wei C.L."/>
            <person name="Yagi K."/>
            <person name="Yamanishi H."/>
            <person name="Zabarovsky E."/>
            <person name="Zhu S."/>
            <person name="Zimmer A."/>
            <person name="Hide W."/>
            <person name="Bult C."/>
            <person name="Grimmond S.M."/>
            <person name="Teasdale R.D."/>
            <person name="Liu E.T."/>
            <person name="Brusic V."/>
            <person name="Quackenbush J."/>
            <person name="Wahlestedt C."/>
            <person name="Mattick J.S."/>
            <person name="Hume D.A."/>
            <person name="Kai C."/>
            <person name="Sasaki D."/>
            <person name="Tomaru Y."/>
            <person name="Fukuda S."/>
            <person name="Kanamori-Katayama M."/>
            <person name="Suzuki M."/>
            <person name="Aoki J."/>
            <person name="Arakawa T."/>
            <person name="Iida J."/>
            <person name="Imamura K."/>
            <person name="Itoh M."/>
            <person name="Kato T."/>
            <person name="Kawaji H."/>
            <person name="Kawagashira N."/>
            <person name="Kawashima T."/>
            <person name="Kojima M."/>
            <person name="Kondo S."/>
            <person name="Konno H."/>
            <person name="Nakano K."/>
            <person name="Ninomiya N."/>
            <person name="Nishio T."/>
            <person name="Okada M."/>
            <person name="Plessy C."/>
            <person name="Shibata K."/>
            <person name="Shiraki T."/>
            <person name="Suzuki S."/>
            <person name="Tagami M."/>
            <person name="Waki K."/>
            <person name="Watahiki A."/>
            <person name="Okamura-Oho Y."/>
            <person name="Suzuki H."/>
            <person name="Kawai J."/>
            <person name="Hayashizaki Y."/>
        </authorList>
    </citation>
    <scope>NUCLEOTIDE SEQUENCE [LARGE SCALE MRNA] (ISOFORMS 1 AND 2)</scope>
    <source>
        <strain>C57BL/6J</strain>
        <tissue>Testis</tissue>
    </source>
</reference>
<reference key="2">
    <citation type="submission" date="2005-02" db="EMBL/GenBank/DDBJ databases">
        <title>Prediction of the coding sequences of mouse homologues of KIAA gene. The complete nucleotide sequences of mouse KIAA-homologous cDNAs identified by screening of terminal sequences of cDNA clones randomly sampled from size-fractionated libraries.</title>
        <authorList>
            <person name="Okazaki N."/>
            <person name="Kikuno R.F."/>
            <person name="Ohara R."/>
            <person name="Inamoto S."/>
            <person name="Nagase T."/>
            <person name="Ohara O."/>
            <person name="Koga H."/>
        </authorList>
    </citation>
    <scope>NUCLEOTIDE SEQUENCE [LARGE SCALE MRNA] (ISOFORM 2)</scope>
    <source>
        <tissue>Fetal brain</tissue>
    </source>
</reference>
<reference key="3">
    <citation type="journal article" date="2009" name="PLoS Biol.">
        <title>Lineage-specific biology revealed by a finished genome assembly of the mouse.</title>
        <authorList>
            <person name="Church D.M."/>
            <person name="Goodstadt L."/>
            <person name="Hillier L.W."/>
            <person name="Zody M.C."/>
            <person name="Goldstein S."/>
            <person name="She X."/>
            <person name="Bult C.J."/>
            <person name="Agarwala R."/>
            <person name="Cherry J.L."/>
            <person name="DiCuccio M."/>
            <person name="Hlavina W."/>
            <person name="Kapustin Y."/>
            <person name="Meric P."/>
            <person name="Maglott D."/>
            <person name="Birtle Z."/>
            <person name="Marques A.C."/>
            <person name="Graves T."/>
            <person name="Zhou S."/>
            <person name="Teague B."/>
            <person name="Potamousis K."/>
            <person name="Churas C."/>
            <person name="Place M."/>
            <person name="Herschleb J."/>
            <person name="Runnheim R."/>
            <person name="Forrest D."/>
            <person name="Amos-Landgraf J."/>
            <person name="Schwartz D.C."/>
            <person name="Cheng Z."/>
            <person name="Lindblad-Toh K."/>
            <person name="Eichler E.E."/>
            <person name="Ponting C.P."/>
        </authorList>
    </citation>
    <scope>NUCLEOTIDE SEQUENCE [LARGE SCALE GENOMIC DNA]</scope>
    <source>
        <strain>C57BL/6J</strain>
    </source>
</reference>
<reference key="4">
    <citation type="journal article" date="2004" name="Genome Res.">
        <title>The status, quality, and expansion of the NIH full-length cDNA project: the Mammalian Gene Collection (MGC).</title>
        <authorList>
            <consortium name="The MGC Project Team"/>
        </authorList>
    </citation>
    <scope>NUCLEOTIDE SEQUENCE [LARGE SCALE MRNA] (ISOFORM 2)</scope>
    <source>
        <tissue>Brain</tissue>
    </source>
</reference>
<reference key="5">
    <citation type="journal article" date="2010" name="Cell">
        <title>A tissue-specific atlas of mouse protein phosphorylation and expression.</title>
        <authorList>
            <person name="Huttlin E.L."/>
            <person name="Jedrychowski M.P."/>
            <person name="Elias J.E."/>
            <person name="Goswami T."/>
            <person name="Rad R."/>
            <person name="Beausoleil S.A."/>
            <person name="Villen J."/>
            <person name="Haas W."/>
            <person name="Sowa M.E."/>
            <person name="Gygi S.P."/>
        </authorList>
    </citation>
    <scope>IDENTIFICATION BY MASS SPECTROMETRY [LARGE SCALE ANALYSIS]</scope>
    <source>
        <tissue>Testis</tissue>
    </source>
</reference>
<proteinExistence type="evidence at protein level"/>
<protein>
    <recommendedName>
        <fullName>Coiled-coil domain-containing protein 157</fullName>
    </recommendedName>
</protein>
<name>CC157_MOUSE</name>